<accession>Q8ER96</accession>
<keyword id="KW-0378">Hydrolase</keyword>
<keyword id="KW-0408">Iron</keyword>
<keyword id="KW-0479">Metal-binding</keyword>
<keyword id="KW-0648">Protein biosynthesis</keyword>
<keyword id="KW-1185">Reference proteome</keyword>
<name>DEF_OCEIH</name>
<gene>
    <name evidence="1" type="primary">def</name>
    <name type="ordered locus">OB1410</name>
</gene>
<protein>
    <recommendedName>
        <fullName evidence="1">Peptide deformylase</fullName>
        <shortName evidence="1">PDF</shortName>
        <ecNumber evidence="1">3.5.1.88</ecNumber>
    </recommendedName>
    <alternativeName>
        <fullName evidence="1">Polypeptide deformylase</fullName>
    </alternativeName>
</protein>
<evidence type="ECO:0000255" key="1">
    <source>
        <dbReference type="HAMAP-Rule" id="MF_00163"/>
    </source>
</evidence>
<sequence>MITMKDIVREGHPSLTRSAAVVEVPLSKDDKQLLEDMMQFLKNSQDEEIAEKYELRAGVGIAAPQLGIEKQIIAIHFEDIDGKLYSMGLVNPKIISHSVEQSYLSSGEGCLSVDRPVEGYVPRHARITIKATDINDQPVKLRLKGYPAIVFQHEIDHINGIMFFDRINTEDPFNIPENSSPIQ</sequence>
<reference key="1">
    <citation type="journal article" date="2002" name="Nucleic Acids Res.">
        <title>Genome sequence of Oceanobacillus iheyensis isolated from the Iheya Ridge and its unexpected adaptive capabilities to extreme environments.</title>
        <authorList>
            <person name="Takami H."/>
            <person name="Takaki Y."/>
            <person name="Uchiyama I."/>
        </authorList>
    </citation>
    <scope>NUCLEOTIDE SEQUENCE [LARGE SCALE GENOMIC DNA]</scope>
    <source>
        <strain>DSM 14371 / CIP 107618 / JCM 11309 / KCTC 3954 / HTE831</strain>
    </source>
</reference>
<proteinExistence type="inferred from homology"/>
<feature type="chain" id="PRO_0000082811" description="Peptide deformylase">
    <location>
        <begin position="1"/>
        <end position="183"/>
    </location>
</feature>
<feature type="active site" evidence="1">
    <location>
        <position position="154"/>
    </location>
</feature>
<feature type="binding site" evidence="1">
    <location>
        <position position="110"/>
    </location>
    <ligand>
        <name>Fe cation</name>
        <dbReference type="ChEBI" id="CHEBI:24875"/>
    </ligand>
</feature>
<feature type="binding site" evidence="1">
    <location>
        <position position="153"/>
    </location>
    <ligand>
        <name>Fe cation</name>
        <dbReference type="ChEBI" id="CHEBI:24875"/>
    </ligand>
</feature>
<feature type="binding site" evidence="1">
    <location>
        <position position="157"/>
    </location>
    <ligand>
        <name>Fe cation</name>
        <dbReference type="ChEBI" id="CHEBI:24875"/>
    </ligand>
</feature>
<dbReference type="EC" id="3.5.1.88" evidence="1"/>
<dbReference type="EMBL" id="BA000028">
    <property type="protein sequence ID" value="BAC13366.1"/>
    <property type="molecule type" value="Genomic_DNA"/>
</dbReference>
<dbReference type="RefSeq" id="WP_011065816.1">
    <property type="nucleotide sequence ID" value="NC_004193.1"/>
</dbReference>
<dbReference type="SMR" id="Q8ER96"/>
<dbReference type="STRING" id="221109.gene:10733650"/>
<dbReference type="KEGG" id="oih:OB1410"/>
<dbReference type="eggNOG" id="COG0242">
    <property type="taxonomic scope" value="Bacteria"/>
</dbReference>
<dbReference type="HOGENOM" id="CLU_061901_4_0_9"/>
<dbReference type="OrthoDB" id="9784988at2"/>
<dbReference type="PhylomeDB" id="Q8ER96"/>
<dbReference type="Proteomes" id="UP000000822">
    <property type="component" value="Chromosome"/>
</dbReference>
<dbReference type="GO" id="GO:0046872">
    <property type="term" value="F:metal ion binding"/>
    <property type="evidence" value="ECO:0007669"/>
    <property type="project" value="UniProtKB-KW"/>
</dbReference>
<dbReference type="GO" id="GO:0042586">
    <property type="term" value="F:peptide deformylase activity"/>
    <property type="evidence" value="ECO:0007669"/>
    <property type="project" value="UniProtKB-UniRule"/>
</dbReference>
<dbReference type="GO" id="GO:0043686">
    <property type="term" value="P:co-translational protein modification"/>
    <property type="evidence" value="ECO:0007669"/>
    <property type="project" value="TreeGrafter"/>
</dbReference>
<dbReference type="GO" id="GO:0006412">
    <property type="term" value="P:translation"/>
    <property type="evidence" value="ECO:0007669"/>
    <property type="project" value="UniProtKB-UniRule"/>
</dbReference>
<dbReference type="CDD" id="cd00487">
    <property type="entry name" value="Pep_deformylase"/>
    <property type="match status" value="1"/>
</dbReference>
<dbReference type="FunFam" id="3.90.45.10:FF:000002">
    <property type="entry name" value="Peptide deformylase"/>
    <property type="match status" value="1"/>
</dbReference>
<dbReference type="Gene3D" id="3.90.45.10">
    <property type="entry name" value="Peptide deformylase"/>
    <property type="match status" value="1"/>
</dbReference>
<dbReference type="HAMAP" id="MF_00163">
    <property type="entry name" value="Pep_deformylase"/>
    <property type="match status" value="1"/>
</dbReference>
<dbReference type="InterPro" id="IPR023635">
    <property type="entry name" value="Peptide_deformylase"/>
</dbReference>
<dbReference type="InterPro" id="IPR036821">
    <property type="entry name" value="Peptide_deformylase_sf"/>
</dbReference>
<dbReference type="NCBIfam" id="TIGR00079">
    <property type="entry name" value="pept_deformyl"/>
    <property type="match status" value="1"/>
</dbReference>
<dbReference type="PANTHER" id="PTHR10458">
    <property type="entry name" value="PEPTIDE DEFORMYLASE"/>
    <property type="match status" value="1"/>
</dbReference>
<dbReference type="PANTHER" id="PTHR10458:SF8">
    <property type="entry name" value="PEPTIDE DEFORMYLASE 2"/>
    <property type="match status" value="1"/>
</dbReference>
<dbReference type="Pfam" id="PF01327">
    <property type="entry name" value="Pep_deformylase"/>
    <property type="match status" value="1"/>
</dbReference>
<dbReference type="PIRSF" id="PIRSF004749">
    <property type="entry name" value="Pep_def"/>
    <property type="match status" value="1"/>
</dbReference>
<dbReference type="PRINTS" id="PR01576">
    <property type="entry name" value="PDEFORMYLASE"/>
</dbReference>
<dbReference type="SUPFAM" id="SSF56420">
    <property type="entry name" value="Peptide deformylase"/>
    <property type="match status" value="1"/>
</dbReference>
<organism>
    <name type="scientific">Oceanobacillus iheyensis (strain DSM 14371 / CIP 107618 / JCM 11309 / KCTC 3954 / HTE831)</name>
    <dbReference type="NCBI Taxonomy" id="221109"/>
    <lineage>
        <taxon>Bacteria</taxon>
        <taxon>Bacillati</taxon>
        <taxon>Bacillota</taxon>
        <taxon>Bacilli</taxon>
        <taxon>Bacillales</taxon>
        <taxon>Bacillaceae</taxon>
        <taxon>Oceanobacillus</taxon>
    </lineage>
</organism>
<comment type="function">
    <text evidence="1">Removes the formyl group from the N-terminal Met of newly synthesized proteins. Requires at least a dipeptide for an efficient rate of reaction. N-terminal L-methionine is a prerequisite for activity but the enzyme has broad specificity at other positions.</text>
</comment>
<comment type="catalytic activity">
    <reaction evidence="1">
        <text>N-terminal N-formyl-L-methionyl-[peptide] + H2O = N-terminal L-methionyl-[peptide] + formate</text>
        <dbReference type="Rhea" id="RHEA:24420"/>
        <dbReference type="Rhea" id="RHEA-COMP:10639"/>
        <dbReference type="Rhea" id="RHEA-COMP:10640"/>
        <dbReference type="ChEBI" id="CHEBI:15377"/>
        <dbReference type="ChEBI" id="CHEBI:15740"/>
        <dbReference type="ChEBI" id="CHEBI:49298"/>
        <dbReference type="ChEBI" id="CHEBI:64731"/>
        <dbReference type="EC" id="3.5.1.88"/>
    </reaction>
</comment>
<comment type="cofactor">
    <cofactor evidence="1">
        <name>Fe(2+)</name>
        <dbReference type="ChEBI" id="CHEBI:29033"/>
    </cofactor>
    <text evidence="1">Binds 1 Fe(2+) ion.</text>
</comment>
<comment type="similarity">
    <text evidence="1">Belongs to the polypeptide deformylase family.</text>
</comment>